<feature type="chain" id="PRO_0000233403" description="Coiled-coil domain-containing protein 25">
    <location>
        <begin position="1"/>
        <end position="208"/>
    </location>
</feature>
<feature type="topological domain" description="Extracellular" evidence="4">
    <location>
        <begin position="1"/>
        <end position="105"/>
    </location>
</feature>
<feature type="transmembrane region" description="Helical" evidence="2">
    <location>
        <begin position="106"/>
        <end position="122"/>
    </location>
</feature>
<feature type="topological domain" description="Cytoplasmic" evidence="4">
    <location>
        <begin position="123"/>
        <end position="208"/>
    </location>
</feature>
<feature type="region of interest" description="DNA-binding" evidence="1">
    <location>
        <begin position="21"/>
        <end position="25"/>
    </location>
</feature>
<feature type="region of interest" description="Disordered" evidence="3">
    <location>
        <begin position="145"/>
        <end position="208"/>
    </location>
</feature>
<feature type="coiled-coil region" evidence="2">
    <location>
        <begin position="117"/>
        <end position="187"/>
    </location>
</feature>
<feature type="compositionally biased region" description="Basic and acidic residues" evidence="3">
    <location>
        <begin position="145"/>
        <end position="184"/>
    </location>
</feature>
<feature type="modified residue" description="N6-acetyllysine" evidence="1">
    <location>
        <position position="23"/>
    </location>
</feature>
<feature type="modified residue" description="Phosphoserine" evidence="1">
    <location>
        <position position="204"/>
    </location>
</feature>
<gene>
    <name evidence="1" type="primary">CCDC25</name>
</gene>
<keyword id="KW-0007">Acetylation</keyword>
<keyword id="KW-1003">Cell membrane</keyword>
<keyword id="KW-0175">Coiled coil</keyword>
<keyword id="KW-0238">DNA-binding</keyword>
<keyword id="KW-0472">Membrane</keyword>
<keyword id="KW-0597">Phosphoprotein</keyword>
<keyword id="KW-1185">Reference proteome</keyword>
<keyword id="KW-0812">Transmembrane</keyword>
<keyword id="KW-1133">Transmembrane helix</keyword>
<dbReference type="EMBL" id="BC102662">
    <property type="protein sequence ID" value="AAI02663.1"/>
    <property type="molecule type" value="mRNA"/>
</dbReference>
<dbReference type="RefSeq" id="NP_001030216.1">
    <property type="nucleotide sequence ID" value="NM_001035044.1"/>
</dbReference>
<dbReference type="SMR" id="Q3SZX8"/>
<dbReference type="FunCoup" id="Q3SZX8">
    <property type="interactions" value="3421"/>
</dbReference>
<dbReference type="STRING" id="9913.ENSBTAP00000008601"/>
<dbReference type="PaxDb" id="9913-ENSBTAP00000008601"/>
<dbReference type="GeneID" id="507275"/>
<dbReference type="KEGG" id="bta:507275"/>
<dbReference type="CTD" id="55246"/>
<dbReference type="eggNOG" id="KOG3272">
    <property type="taxonomic scope" value="Eukaryota"/>
</dbReference>
<dbReference type="HOGENOM" id="CLU_076656_0_1_1"/>
<dbReference type="InParanoid" id="Q3SZX8"/>
<dbReference type="OrthoDB" id="200398at2759"/>
<dbReference type="TreeFam" id="TF300013"/>
<dbReference type="Proteomes" id="UP000009136">
    <property type="component" value="Unplaced"/>
</dbReference>
<dbReference type="GO" id="GO:0012505">
    <property type="term" value="C:endomembrane system"/>
    <property type="evidence" value="ECO:0000250"/>
    <property type="project" value="UniProtKB"/>
</dbReference>
<dbReference type="GO" id="GO:0005886">
    <property type="term" value="C:plasma membrane"/>
    <property type="evidence" value="ECO:0000250"/>
    <property type="project" value="UniProtKB"/>
</dbReference>
<dbReference type="GO" id="GO:0003677">
    <property type="term" value="F:DNA binding"/>
    <property type="evidence" value="ECO:0000250"/>
    <property type="project" value="UniProtKB"/>
</dbReference>
<dbReference type="GO" id="GO:2000147">
    <property type="term" value="P:positive regulation of cell motility"/>
    <property type="evidence" value="ECO:0000250"/>
    <property type="project" value="UniProtKB"/>
</dbReference>
<dbReference type="InterPro" id="IPR039730">
    <property type="entry name" value="Jlp2/Ccd25"/>
</dbReference>
<dbReference type="InterPro" id="IPR008532">
    <property type="entry name" value="NFACT_RNA-bd"/>
</dbReference>
<dbReference type="PANTHER" id="PTHR13049:SF2">
    <property type="entry name" value="COILED-COIL DOMAIN-CONTAINING PROTEIN 25"/>
    <property type="match status" value="1"/>
</dbReference>
<dbReference type="PANTHER" id="PTHR13049">
    <property type="entry name" value="DUF814-RELATED"/>
    <property type="match status" value="1"/>
</dbReference>
<dbReference type="Pfam" id="PF05670">
    <property type="entry name" value="NFACT-R_1"/>
    <property type="match status" value="1"/>
</dbReference>
<protein>
    <recommendedName>
        <fullName evidence="4">Coiled-coil domain-containing protein 25</fullName>
    </recommendedName>
</protein>
<comment type="function">
    <text evidence="1">Transmembrane receptor that senses neutrophil extracellular traps (NETs) and triggers the ILK-PARVB pathway to enhance cell motility. NETs are mainly composed of DNA fibers and are released by neutrophils to bind pathogens during inflammation. Formation of NETs is also associated with cancer metastasis, NET-DNA acting as a chemotactic factor to attract cancer cells. Specifically binds NETs on its extracellular region, in particular the 8-OHdG-enriched DNA present in NETs, and recruits ILK, initiating the ILK-PARVB cascade to induce cytoskeleton rearrangement and directional migration of cells.</text>
</comment>
<comment type="subunit">
    <text evidence="1">Interacts (via cytoplasmic region) with ILK.</text>
</comment>
<comment type="subcellular location">
    <subcellularLocation>
        <location evidence="1">Cell membrane</location>
        <topology evidence="1">Single-pass membrane protein</topology>
    </subcellularLocation>
    <subcellularLocation>
        <location evidence="1">Endomembrane system</location>
    </subcellularLocation>
    <text evidence="1">Localizes to cytoplasmic membrane in tumor cells.</text>
</comment>
<comment type="similarity">
    <text evidence="4">Belongs to the CCDC25 family.</text>
</comment>
<accession>Q3SZX8</accession>
<sequence>MVFYFTSSSVNSSAYTIYMGKDKYENEDLIKYGWPEDIWFHVDKLSSAHVYLRLHKGEKIEDIPKEVLMDCAHLVKANSIQGCKMNNVNVVYTPWSNLKKTADMDVGQIGFHRQKDVKIVTVEKKVNEILNRLEKTKMERFPDLEAEKECRDHEERNEKKAQIQEMKRREKEEMKKKREMDELRSYSSLMKVENMSSNQDGNDSDEFM</sequence>
<proteinExistence type="evidence at transcript level"/>
<evidence type="ECO:0000250" key="1">
    <source>
        <dbReference type="UniProtKB" id="Q86WR0"/>
    </source>
</evidence>
<evidence type="ECO:0000255" key="2"/>
<evidence type="ECO:0000256" key="3">
    <source>
        <dbReference type="SAM" id="MobiDB-lite"/>
    </source>
</evidence>
<evidence type="ECO:0000305" key="4"/>
<organism>
    <name type="scientific">Bos taurus</name>
    <name type="common">Bovine</name>
    <dbReference type="NCBI Taxonomy" id="9913"/>
    <lineage>
        <taxon>Eukaryota</taxon>
        <taxon>Metazoa</taxon>
        <taxon>Chordata</taxon>
        <taxon>Craniata</taxon>
        <taxon>Vertebrata</taxon>
        <taxon>Euteleostomi</taxon>
        <taxon>Mammalia</taxon>
        <taxon>Eutheria</taxon>
        <taxon>Laurasiatheria</taxon>
        <taxon>Artiodactyla</taxon>
        <taxon>Ruminantia</taxon>
        <taxon>Pecora</taxon>
        <taxon>Bovidae</taxon>
        <taxon>Bovinae</taxon>
        <taxon>Bos</taxon>
    </lineage>
</organism>
<name>CCD25_BOVIN</name>
<reference key="1">
    <citation type="submission" date="2005-08" db="EMBL/GenBank/DDBJ databases">
        <authorList>
            <consortium name="NIH - Mammalian Gene Collection (MGC) project"/>
        </authorList>
    </citation>
    <scope>NUCLEOTIDE SEQUENCE [LARGE SCALE MRNA]</scope>
    <source>
        <strain>Crossbred X Angus</strain>
        <tissue>Liver</tissue>
    </source>
</reference>